<proteinExistence type="inferred from homology"/>
<sequence>MSGKVDKKKGSSVKKTEGKSKEISALAAKIRAKALENQKKMLKNSETTSDQEDDPSESEEEEGSDSEDVEVSKDKQEEEEEGETFESFSDLDLVPELIEACKNLNFAKPTPIQARSIPPALQGHDIIGLAQTGSGKTAAFAIPILNRLWHDQQPYYACILAPTRELAQQIKETFDSLGSLMGVRSACIVGGMNMMDQARDLMRKPHIIIATPGRLMDHLENTRGFSLRKLKFLVMDEADRLLDMEFGPVLDRILKIIPTQGRTTYLFSATMTSKIDKLQRASLTNPVKCAVSNKYQTVDTLVQTLIVVPGGLKNTYLIYLMNEFIGKTIIVFTRTKANAERITTLANLLEFSATALHGDLNQNQRTGSLDLFKAGRRSILVATDVAARGLDIPSVDIVINYDIPVDSKSYIHRVGRTARAGRSGKSISLVSQYDLELILRIEDVLGKKLPKENVNKDAILTLRDSVDKANGEVVMELNRRNKEKIARGKGRRGRMAARDDMDKGER</sequence>
<reference key="1">
    <citation type="journal article" date="2007" name="Proc. Natl. Acad. Sci. U.S.A.">
        <title>Independent sorting-out of thousands of duplicated gene pairs in two yeast species descended from a whole-genome duplication.</title>
        <authorList>
            <person name="Scannell D.R."/>
            <person name="Frank A.C."/>
            <person name="Conant G.C."/>
            <person name="Byrne K.P."/>
            <person name="Woolfit M."/>
            <person name="Wolfe K.H."/>
        </authorList>
    </citation>
    <scope>NUCLEOTIDE SEQUENCE [LARGE SCALE GENOMIC DNA]</scope>
    <source>
        <strain>ATCC 22028 / DSM 70294 / BCRC 21397 / CBS 2163 / NBRC 10782 / NRRL Y-8283 / UCD 57-17</strain>
    </source>
</reference>
<organism>
    <name type="scientific">Vanderwaltozyma polyspora (strain ATCC 22028 / DSM 70294 / BCRC 21397 / CBS 2163 / NBRC 10782 / NRRL Y-8283 / UCD 57-17)</name>
    <name type="common">Kluyveromyces polysporus</name>
    <dbReference type="NCBI Taxonomy" id="436907"/>
    <lineage>
        <taxon>Eukaryota</taxon>
        <taxon>Fungi</taxon>
        <taxon>Dikarya</taxon>
        <taxon>Ascomycota</taxon>
        <taxon>Saccharomycotina</taxon>
        <taxon>Saccharomycetes</taxon>
        <taxon>Saccharomycetales</taxon>
        <taxon>Saccharomycetaceae</taxon>
        <taxon>Vanderwaltozyma</taxon>
    </lineage>
</organism>
<feature type="chain" id="PRO_0000310233" description="ATP-dependent rRNA helicase RRP3">
    <location>
        <begin position="1"/>
        <end position="506"/>
    </location>
</feature>
<feature type="domain" description="Helicase ATP-binding" evidence="2">
    <location>
        <begin position="117"/>
        <end position="289"/>
    </location>
</feature>
<feature type="domain" description="Helicase C-terminal" evidence="3">
    <location>
        <begin position="312"/>
        <end position="460"/>
    </location>
</feature>
<feature type="region of interest" description="Disordered" evidence="4">
    <location>
        <begin position="1"/>
        <end position="22"/>
    </location>
</feature>
<feature type="region of interest" description="Disordered" evidence="4">
    <location>
        <begin position="37"/>
        <end position="88"/>
    </location>
</feature>
<feature type="region of interest" description="Disordered" evidence="4">
    <location>
        <begin position="485"/>
        <end position="506"/>
    </location>
</feature>
<feature type="short sequence motif" description="Q motif" evidence="5">
    <location>
        <begin position="86"/>
        <end position="114"/>
    </location>
</feature>
<feature type="short sequence motif" description="DEAD box" evidence="5">
    <location>
        <begin position="236"/>
        <end position="239"/>
    </location>
</feature>
<feature type="compositionally biased region" description="Acidic residues" evidence="4">
    <location>
        <begin position="49"/>
        <end position="69"/>
    </location>
</feature>
<feature type="compositionally biased region" description="Basic and acidic residues" evidence="4">
    <location>
        <begin position="496"/>
        <end position="506"/>
    </location>
</feature>
<feature type="binding site" evidence="2">
    <location>
        <begin position="130"/>
        <end position="137"/>
    </location>
    <ligand>
        <name>ATP</name>
        <dbReference type="ChEBI" id="CHEBI:30616"/>
    </ligand>
</feature>
<comment type="function">
    <text evidence="1">ATP-dependent rRNA helicase required for pre-ribosomal RNA processing. Involved in the maturation of the 35S-pre-rRNA and to its cleavage to mature 18S rRNA.</text>
</comment>
<comment type="catalytic activity">
    <reaction evidence="1">
        <text>ATP + H2O = ADP + phosphate + H(+)</text>
        <dbReference type="Rhea" id="RHEA:13065"/>
        <dbReference type="ChEBI" id="CHEBI:15377"/>
        <dbReference type="ChEBI" id="CHEBI:15378"/>
        <dbReference type="ChEBI" id="CHEBI:30616"/>
        <dbReference type="ChEBI" id="CHEBI:43474"/>
        <dbReference type="ChEBI" id="CHEBI:456216"/>
        <dbReference type="EC" id="3.6.4.13"/>
    </reaction>
</comment>
<comment type="subunit">
    <text evidence="1">Interacts with the SSU processome.</text>
</comment>
<comment type="subcellular location">
    <subcellularLocation>
        <location evidence="5">Nucleus</location>
    </subcellularLocation>
</comment>
<comment type="domain">
    <text evidence="5">The Q motif is unique to and characteristic of the DEAD box family of RNA helicases and controls ATP binding and hydrolysis.</text>
</comment>
<comment type="similarity">
    <text evidence="5">Belongs to the DEAD box helicase family. DDX47/RRP3 subfamily.</text>
</comment>
<protein>
    <recommendedName>
        <fullName evidence="5">ATP-dependent rRNA helicase RRP3</fullName>
        <ecNumber evidence="1">3.6.4.13</ecNumber>
    </recommendedName>
</protein>
<evidence type="ECO:0000250" key="1">
    <source>
        <dbReference type="UniProtKB" id="P38712"/>
    </source>
</evidence>
<evidence type="ECO:0000255" key="2">
    <source>
        <dbReference type="PROSITE-ProRule" id="PRU00541"/>
    </source>
</evidence>
<evidence type="ECO:0000255" key="3">
    <source>
        <dbReference type="PROSITE-ProRule" id="PRU00542"/>
    </source>
</evidence>
<evidence type="ECO:0000256" key="4">
    <source>
        <dbReference type="SAM" id="MobiDB-lite"/>
    </source>
</evidence>
<evidence type="ECO:0000305" key="5"/>
<keyword id="KW-0067">ATP-binding</keyword>
<keyword id="KW-0347">Helicase</keyword>
<keyword id="KW-0378">Hydrolase</keyword>
<keyword id="KW-0547">Nucleotide-binding</keyword>
<keyword id="KW-0539">Nucleus</keyword>
<keyword id="KW-1185">Reference proteome</keyword>
<keyword id="KW-0690">Ribosome biogenesis</keyword>
<keyword id="KW-0694">RNA-binding</keyword>
<keyword id="KW-0698">rRNA processing</keyword>
<name>RRP3_VANPO</name>
<gene>
    <name evidence="1" type="primary">RRP3</name>
    <name type="ORF">Kpol_1005p11</name>
</gene>
<accession>A7TS37</accession>
<dbReference type="EC" id="3.6.4.13" evidence="1"/>
<dbReference type="EMBL" id="DS480497">
    <property type="protein sequence ID" value="EDO14923.1"/>
    <property type="molecule type" value="Genomic_DNA"/>
</dbReference>
<dbReference type="RefSeq" id="XP_001642781.1">
    <property type="nucleotide sequence ID" value="XM_001642731.1"/>
</dbReference>
<dbReference type="SMR" id="A7TS37"/>
<dbReference type="FunCoup" id="A7TS37">
    <property type="interactions" value="1204"/>
</dbReference>
<dbReference type="STRING" id="436907.A7TS37"/>
<dbReference type="GeneID" id="5542951"/>
<dbReference type="KEGG" id="vpo:Kpol_1005p11"/>
<dbReference type="eggNOG" id="KOG0330">
    <property type="taxonomic scope" value="Eukaryota"/>
</dbReference>
<dbReference type="HOGENOM" id="CLU_003041_1_1_1"/>
<dbReference type="InParanoid" id="A7TS37"/>
<dbReference type="OMA" id="GIGIKCC"/>
<dbReference type="OrthoDB" id="10261904at2759"/>
<dbReference type="PhylomeDB" id="A7TS37"/>
<dbReference type="Proteomes" id="UP000000267">
    <property type="component" value="Unassembled WGS sequence"/>
</dbReference>
<dbReference type="GO" id="GO:0005829">
    <property type="term" value="C:cytosol"/>
    <property type="evidence" value="ECO:0007669"/>
    <property type="project" value="TreeGrafter"/>
</dbReference>
<dbReference type="GO" id="GO:0005730">
    <property type="term" value="C:nucleolus"/>
    <property type="evidence" value="ECO:0007669"/>
    <property type="project" value="EnsemblFungi"/>
</dbReference>
<dbReference type="GO" id="GO:0032040">
    <property type="term" value="C:small-subunit processome"/>
    <property type="evidence" value="ECO:0007669"/>
    <property type="project" value="EnsemblFungi"/>
</dbReference>
<dbReference type="GO" id="GO:0005524">
    <property type="term" value="F:ATP binding"/>
    <property type="evidence" value="ECO:0007669"/>
    <property type="project" value="UniProtKB-KW"/>
</dbReference>
<dbReference type="GO" id="GO:0016887">
    <property type="term" value="F:ATP hydrolysis activity"/>
    <property type="evidence" value="ECO:0007669"/>
    <property type="project" value="RHEA"/>
</dbReference>
<dbReference type="GO" id="GO:0003723">
    <property type="term" value="F:RNA binding"/>
    <property type="evidence" value="ECO:0007669"/>
    <property type="project" value="UniProtKB-KW"/>
</dbReference>
<dbReference type="GO" id="GO:0003724">
    <property type="term" value="F:RNA helicase activity"/>
    <property type="evidence" value="ECO:0007669"/>
    <property type="project" value="UniProtKB-EC"/>
</dbReference>
<dbReference type="GO" id="GO:0000462">
    <property type="term" value="P:maturation of SSU-rRNA from tricistronic rRNA transcript (SSU-rRNA, 5.8S rRNA, LSU-rRNA)"/>
    <property type="evidence" value="ECO:0007669"/>
    <property type="project" value="EnsemblFungi"/>
</dbReference>
<dbReference type="CDD" id="cd17954">
    <property type="entry name" value="DEADc_DDX47"/>
    <property type="match status" value="1"/>
</dbReference>
<dbReference type="CDD" id="cd18787">
    <property type="entry name" value="SF2_C_DEAD"/>
    <property type="match status" value="1"/>
</dbReference>
<dbReference type="FunFam" id="3.40.50.300:FF:000626">
    <property type="entry name" value="probable ATP-dependent RNA helicase DDX47"/>
    <property type="match status" value="1"/>
</dbReference>
<dbReference type="FunFam" id="3.40.50.300:FF:000681">
    <property type="entry name" value="probable ATP-dependent RNA helicase DDX47"/>
    <property type="match status" value="1"/>
</dbReference>
<dbReference type="Gene3D" id="3.40.50.300">
    <property type="entry name" value="P-loop containing nucleotide triphosphate hydrolases"/>
    <property type="match status" value="2"/>
</dbReference>
<dbReference type="InterPro" id="IPR044765">
    <property type="entry name" value="DDX47/Rrp3_DEADc"/>
</dbReference>
<dbReference type="InterPro" id="IPR011545">
    <property type="entry name" value="DEAD/DEAH_box_helicase_dom"/>
</dbReference>
<dbReference type="InterPro" id="IPR050079">
    <property type="entry name" value="DEAD_box_RNA_helicase"/>
</dbReference>
<dbReference type="InterPro" id="IPR014001">
    <property type="entry name" value="Helicase_ATP-bd"/>
</dbReference>
<dbReference type="InterPro" id="IPR001650">
    <property type="entry name" value="Helicase_C-like"/>
</dbReference>
<dbReference type="InterPro" id="IPR027417">
    <property type="entry name" value="P-loop_NTPase"/>
</dbReference>
<dbReference type="InterPro" id="IPR000629">
    <property type="entry name" value="RNA-helicase_DEAD-box_CS"/>
</dbReference>
<dbReference type="InterPro" id="IPR014014">
    <property type="entry name" value="RNA_helicase_DEAD_Q_motif"/>
</dbReference>
<dbReference type="PANTHER" id="PTHR47959:SF24">
    <property type="entry name" value="ATP-DEPENDENT RNA HELICASE"/>
    <property type="match status" value="1"/>
</dbReference>
<dbReference type="PANTHER" id="PTHR47959">
    <property type="entry name" value="ATP-DEPENDENT RNA HELICASE RHLE-RELATED"/>
    <property type="match status" value="1"/>
</dbReference>
<dbReference type="Pfam" id="PF00270">
    <property type="entry name" value="DEAD"/>
    <property type="match status" value="1"/>
</dbReference>
<dbReference type="Pfam" id="PF00271">
    <property type="entry name" value="Helicase_C"/>
    <property type="match status" value="1"/>
</dbReference>
<dbReference type="SMART" id="SM00487">
    <property type="entry name" value="DEXDc"/>
    <property type="match status" value="1"/>
</dbReference>
<dbReference type="SMART" id="SM00490">
    <property type="entry name" value="HELICc"/>
    <property type="match status" value="1"/>
</dbReference>
<dbReference type="SUPFAM" id="SSF52540">
    <property type="entry name" value="P-loop containing nucleoside triphosphate hydrolases"/>
    <property type="match status" value="1"/>
</dbReference>
<dbReference type="PROSITE" id="PS00039">
    <property type="entry name" value="DEAD_ATP_HELICASE"/>
    <property type="match status" value="1"/>
</dbReference>
<dbReference type="PROSITE" id="PS51192">
    <property type="entry name" value="HELICASE_ATP_BIND_1"/>
    <property type="match status" value="1"/>
</dbReference>
<dbReference type="PROSITE" id="PS51194">
    <property type="entry name" value="HELICASE_CTER"/>
    <property type="match status" value="1"/>
</dbReference>
<dbReference type="PROSITE" id="PS51195">
    <property type="entry name" value="Q_MOTIF"/>
    <property type="match status" value="1"/>
</dbReference>